<sequence length="200" mass="22201">MNIINLPELNYEVFFVFIELGLIFGSLGVVFLTNIVYSAFLLGLVFVCISFLYLLLDADFVATAQILIYVGAVNILIVFAVMLINKPQSLQFLPSWTVGDTITLILCTSLFFLLISMILSISWSNIFSIAQSNKIGEQVLKSSVQGIGSSLLIDFLLPFELLSIVLLVALIGAITIARREKKVKLQKNRTLQVTKDSFIL</sequence>
<evidence type="ECO:0000250" key="1"/>
<evidence type="ECO:0000255" key="2"/>
<evidence type="ECO:0000269" key="3">
    <source>
    </source>
</evidence>
<evidence type="ECO:0000269" key="4">
    <source>
    </source>
</evidence>
<evidence type="ECO:0000305" key="5"/>
<reference key="1">
    <citation type="journal article" date="2003" name="Nucleic Acids Res.">
        <title>The complete nucleotide sequence of the hornwort (Anthoceros formosae) chloroplast genome: insight into the earliest land plants.</title>
        <authorList>
            <person name="Kugita M."/>
            <person name="Kaneko A."/>
            <person name="Yamamoto Y."/>
            <person name="Takeya Y."/>
            <person name="Matsumoto T."/>
            <person name="Yoshinaga K."/>
        </authorList>
    </citation>
    <scope>NUCLEOTIDE SEQUENCE [LARGE SCALE GENOMIC DNA]</scope>
    <scope>RNA EDITING</scope>
</reference>
<reference key="2">
    <citation type="journal article" date="2003" name="Nucleic Acids Res.">
        <title>RNA editing in hornwort chloroplasts makes more than half the genes functional.</title>
        <authorList>
            <person name="Kugita M."/>
            <person name="Yamamoto Y."/>
            <person name="Fujikawa T."/>
            <person name="Matsumoto T."/>
            <person name="Yoshinaga K."/>
        </authorList>
    </citation>
    <scope>NUCLEOTIDE SEQUENCE [MRNA]</scope>
    <scope>RNA EDITING</scope>
    <source>
        <tissue>Thallus</tissue>
    </source>
</reference>
<dbReference type="EC" id="7.1.1.-"/>
<dbReference type="EMBL" id="AB086179">
    <property type="protein sequence ID" value="BAC55404.1"/>
    <property type="molecule type" value="Genomic_DNA"/>
</dbReference>
<dbReference type="EMBL" id="AB087488">
    <property type="protein sequence ID" value="BAC55504.1"/>
    <property type="molecule type" value="mRNA"/>
</dbReference>
<dbReference type="RefSeq" id="NP_777467.2">
    <property type="nucleotide sequence ID" value="NC_004543.1"/>
</dbReference>
<dbReference type="SMR" id="Q85CT7"/>
<dbReference type="GeneID" id="2553500"/>
<dbReference type="GO" id="GO:0009535">
    <property type="term" value="C:chloroplast thylakoid membrane"/>
    <property type="evidence" value="ECO:0007669"/>
    <property type="project" value="UniProtKB-SubCell"/>
</dbReference>
<dbReference type="GO" id="GO:0008137">
    <property type="term" value="F:NADH dehydrogenase (ubiquinone) activity"/>
    <property type="evidence" value="ECO:0007669"/>
    <property type="project" value="InterPro"/>
</dbReference>
<dbReference type="GO" id="GO:0048038">
    <property type="term" value="F:quinone binding"/>
    <property type="evidence" value="ECO:0007669"/>
    <property type="project" value="UniProtKB-KW"/>
</dbReference>
<dbReference type="FunFam" id="1.20.120.1200:FF:000002">
    <property type="entry name" value="NAD(P)H-quinone oxidoreductase subunit 6, chloroplastic"/>
    <property type="match status" value="1"/>
</dbReference>
<dbReference type="Gene3D" id="1.20.120.1200">
    <property type="entry name" value="NADH-ubiquinone/plastoquinone oxidoreductase chain 6, subunit NuoJ"/>
    <property type="match status" value="1"/>
</dbReference>
<dbReference type="InterPro" id="IPR050290">
    <property type="entry name" value="NAD(P)H-Q_Oxidoreduct_6"/>
</dbReference>
<dbReference type="InterPro" id="IPR001457">
    <property type="entry name" value="NADH_UbQ/plastoQ_OxRdtase_su6"/>
</dbReference>
<dbReference type="InterPro" id="IPR042106">
    <property type="entry name" value="Nuo/plastoQ_OxRdtase_6_NuoJ"/>
</dbReference>
<dbReference type="NCBIfam" id="NF005163">
    <property type="entry name" value="PRK06638.1-3"/>
    <property type="match status" value="1"/>
</dbReference>
<dbReference type="PANTHER" id="PTHR48479">
    <property type="entry name" value="NAD(P)H-QUINONE OXIDOREDUCTASE SUBUNIT 6, CHLOROPLASTIC"/>
    <property type="match status" value="1"/>
</dbReference>
<dbReference type="PANTHER" id="PTHR48479:SF1">
    <property type="entry name" value="NAD(P)H-QUINONE OXIDOREDUCTASE SUBUNIT 6, CHLOROPLASTIC"/>
    <property type="match status" value="1"/>
</dbReference>
<dbReference type="Pfam" id="PF00499">
    <property type="entry name" value="Oxidored_q3"/>
    <property type="match status" value="1"/>
</dbReference>
<accession>Q85CT7</accession>
<proteinExistence type="evidence at transcript level"/>
<feature type="chain" id="PRO_0000118351" description="NAD(P)H-quinone oxidoreductase subunit 6, chloroplastic">
    <location>
        <begin position="1"/>
        <end position="200"/>
    </location>
</feature>
<feature type="transmembrane region" description="Helical" evidence="2">
    <location>
        <begin position="13"/>
        <end position="33"/>
    </location>
</feature>
<feature type="transmembrane region" description="Helical" evidence="2">
    <location>
        <begin position="35"/>
        <end position="55"/>
    </location>
</feature>
<feature type="transmembrane region" description="Helical" evidence="2">
    <location>
        <begin position="64"/>
        <end position="84"/>
    </location>
</feature>
<feature type="transmembrane region" description="Helical" evidence="2">
    <location>
        <begin position="101"/>
        <end position="121"/>
    </location>
</feature>
<feature type="transmembrane region" description="Helical" evidence="2">
    <location>
        <begin position="156"/>
        <end position="176"/>
    </location>
</feature>
<keyword id="KW-0150">Chloroplast</keyword>
<keyword id="KW-0472">Membrane</keyword>
<keyword id="KW-0520">NAD</keyword>
<keyword id="KW-0521">NADP</keyword>
<keyword id="KW-0934">Plastid</keyword>
<keyword id="KW-0618">Plastoquinone</keyword>
<keyword id="KW-0874">Quinone</keyword>
<keyword id="KW-0691">RNA editing</keyword>
<keyword id="KW-0793">Thylakoid</keyword>
<keyword id="KW-1278">Translocase</keyword>
<keyword id="KW-0812">Transmembrane</keyword>
<keyword id="KW-1133">Transmembrane helix</keyword>
<keyword id="KW-0813">Transport</keyword>
<protein>
    <recommendedName>
        <fullName>NAD(P)H-quinone oxidoreductase subunit 6, chloroplastic</fullName>
        <ecNumber>7.1.1.-</ecNumber>
    </recommendedName>
    <alternativeName>
        <fullName>NAD(P)H dehydrogenase subunit 6</fullName>
    </alternativeName>
    <alternativeName>
        <fullName>NADH-plastoquinone oxidoreductase subunit 6</fullName>
    </alternativeName>
</protein>
<name>NU6C_ANTAG</name>
<geneLocation type="chloroplast"/>
<gene>
    <name type="primary">ndhG</name>
</gene>
<organism>
    <name type="scientific">Anthoceros angustus</name>
    <name type="common">Hornwort</name>
    <name type="synonym">Anthoceros formosae</name>
    <dbReference type="NCBI Taxonomy" id="48387"/>
    <lineage>
        <taxon>Eukaryota</taxon>
        <taxon>Viridiplantae</taxon>
        <taxon>Streptophyta</taxon>
        <taxon>Embryophyta</taxon>
        <taxon>Anthocerotophyta</taxon>
        <taxon>Anthocerotopsida</taxon>
        <taxon>Anthocerotidae</taxon>
        <taxon>Anthocerotales</taxon>
        <taxon>Anthocerotaceae</taxon>
        <taxon>Anthoceros</taxon>
    </lineage>
</organism>
<comment type="function">
    <text evidence="1">NDH shuttles electrons from NAD(P)H:plastoquinone, via FMN and iron-sulfur (Fe-S) centers, to quinones in the photosynthetic chain and possibly in a chloroplast respiratory chain. The immediate electron acceptor for the enzyme in this species is believed to be plastoquinone. Couples the redox reaction to proton translocation, and thus conserves the redox energy in a proton gradient (By similarity).</text>
</comment>
<comment type="catalytic activity">
    <reaction>
        <text>a plastoquinone + NADH + (n+1) H(+)(in) = a plastoquinol + NAD(+) + n H(+)(out)</text>
        <dbReference type="Rhea" id="RHEA:42608"/>
        <dbReference type="Rhea" id="RHEA-COMP:9561"/>
        <dbReference type="Rhea" id="RHEA-COMP:9562"/>
        <dbReference type="ChEBI" id="CHEBI:15378"/>
        <dbReference type="ChEBI" id="CHEBI:17757"/>
        <dbReference type="ChEBI" id="CHEBI:57540"/>
        <dbReference type="ChEBI" id="CHEBI:57945"/>
        <dbReference type="ChEBI" id="CHEBI:62192"/>
    </reaction>
</comment>
<comment type="catalytic activity">
    <reaction>
        <text>a plastoquinone + NADPH + (n+1) H(+)(in) = a plastoquinol + NADP(+) + n H(+)(out)</text>
        <dbReference type="Rhea" id="RHEA:42612"/>
        <dbReference type="Rhea" id="RHEA-COMP:9561"/>
        <dbReference type="Rhea" id="RHEA-COMP:9562"/>
        <dbReference type="ChEBI" id="CHEBI:15378"/>
        <dbReference type="ChEBI" id="CHEBI:17757"/>
        <dbReference type="ChEBI" id="CHEBI:57783"/>
        <dbReference type="ChEBI" id="CHEBI:58349"/>
        <dbReference type="ChEBI" id="CHEBI:62192"/>
    </reaction>
</comment>
<comment type="subunit">
    <text evidence="1">NDH is composed of at least 16 different subunits, 5 of which are encoded in the nucleus.</text>
</comment>
<comment type="subcellular location">
    <subcellularLocation>
        <location evidence="1">Plastid</location>
        <location evidence="1">Chloroplast thylakoid membrane</location>
        <topology evidence="1">Multi-pass membrane protein</topology>
    </subcellularLocation>
</comment>
<comment type="RNA editing">
    <location>
        <position position="14" evidence="3 4"/>
    </location>
    <location>
        <position position="15" evidence="3 4"/>
    </location>
    <location>
        <position position="32" evidence="3 4"/>
    </location>
    <location>
        <position position="81" evidence="3 4"/>
    </location>
    <location>
        <position position="113" evidence="3 4"/>
    </location>
    <location>
        <position position="114" evidence="3 4"/>
    </location>
    <location>
        <position position="161" evidence="3 4"/>
    </location>
    <location>
        <position position="162" evidence="3 4"/>
    </location>
    <location>
        <position position="166" evidence="3 4"/>
    </location>
    <location>
        <position position="173" evidence="3 4"/>
    </location>
</comment>
<comment type="similarity">
    <text evidence="5">Belongs to the complex I subunit 6 family.</text>
</comment>